<protein>
    <recommendedName>
        <fullName evidence="1">Tryptophan 2,3-dioxygenase</fullName>
        <shortName evidence="1">TDO</shortName>
        <ecNumber evidence="1">1.13.11.11</ecNumber>
    </recommendedName>
    <alternativeName>
        <fullName evidence="1">Tryptamin 2,3-dioxygenase</fullName>
    </alternativeName>
    <alternativeName>
        <fullName evidence="1">Tryptophan oxygenase</fullName>
        <shortName evidence="1">TO</shortName>
        <shortName evidence="1">TRPO</shortName>
    </alternativeName>
    <alternativeName>
        <fullName evidence="1">Tryptophan pyrrolase</fullName>
    </alternativeName>
    <alternativeName>
        <fullName evidence="1">Tryptophanase</fullName>
    </alternativeName>
</protein>
<accession>A0REX0</accession>
<organism>
    <name type="scientific">Bacillus thuringiensis (strain Al Hakam)</name>
    <dbReference type="NCBI Taxonomy" id="412694"/>
    <lineage>
        <taxon>Bacteria</taxon>
        <taxon>Bacillati</taxon>
        <taxon>Bacillota</taxon>
        <taxon>Bacilli</taxon>
        <taxon>Bacillales</taxon>
        <taxon>Bacillaceae</taxon>
        <taxon>Bacillus</taxon>
        <taxon>Bacillus cereus group</taxon>
    </lineage>
</organism>
<reference key="1">
    <citation type="journal article" date="2007" name="J. Bacteriol.">
        <title>The complete genome sequence of Bacillus thuringiensis Al Hakam.</title>
        <authorList>
            <person name="Challacombe J.F."/>
            <person name="Altherr M.R."/>
            <person name="Xie G."/>
            <person name="Bhotika S.S."/>
            <person name="Brown N."/>
            <person name="Bruce D."/>
            <person name="Campbell C.S."/>
            <person name="Campbell M.L."/>
            <person name="Chen J."/>
            <person name="Chertkov O."/>
            <person name="Cleland C."/>
            <person name="Dimitrijevic M."/>
            <person name="Doggett N.A."/>
            <person name="Fawcett J.J."/>
            <person name="Glavina T."/>
            <person name="Goodwin L.A."/>
            <person name="Green L.D."/>
            <person name="Han C.S."/>
            <person name="Hill K.K."/>
            <person name="Hitchcock P."/>
            <person name="Jackson P.J."/>
            <person name="Keim P."/>
            <person name="Kewalramani A.R."/>
            <person name="Longmire J."/>
            <person name="Lucas S."/>
            <person name="Malfatti S."/>
            <person name="Martinez D."/>
            <person name="McMurry K."/>
            <person name="Meincke L.J."/>
            <person name="Misra M."/>
            <person name="Moseman B.L."/>
            <person name="Mundt M."/>
            <person name="Munk A.C."/>
            <person name="Okinaka R.T."/>
            <person name="Parson-Quintana B."/>
            <person name="Reilly L.P."/>
            <person name="Richardson P."/>
            <person name="Robinson D.L."/>
            <person name="Saunders E."/>
            <person name="Tapia R."/>
            <person name="Tesmer J.G."/>
            <person name="Thayer N."/>
            <person name="Thompson L.S."/>
            <person name="Tice H."/>
            <person name="Ticknor L.O."/>
            <person name="Wills P.L."/>
            <person name="Gilna P."/>
            <person name="Brettin T.S."/>
        </authorList>
    </citation>
    <scope>NUCLEOTIDE SEQUENCE [LARGE SCALE GENOMIC DNA]</scope>
    <source>
        <strain>Al Hakam</strain>
    </source>
</reference>
<sequence>MKENEKVIMEKGIHTDFKENMTYGEYLQLDSLLSSQKRLSDHHDEMLFIVIHQASELWMKLILHELNAAIESIKQDKLQPAFKMLARVSKIQSQIIQSWDILATLTPSEYIEFRDSLGQASGFQSYQYRMIEYALGYKTPHALKIYEKDPELHARLHTALHAPSLYDVAIQALVKEGFPIHKDVLNRDITQPYEEDATVEAAWLEVYADVKKYWNLYQLAEKLIDIEDWLQQWRFRHMKTVERIIGHKMGTGGSSGVSYLKRVLDQRFFPELWNVRTKL</sequence>
<evidence type="ECO:0000255" key="1">
    <source>
        <dbReference type="HAMAP-Rule" id="MF_01972"/>
    </source>
</evidence>
<proteinExistence type="inferred from homology"/>
<comment type="function">
    <text evidence="1">Heme-dependent dioxygenase that catalyzes the oxidative cleavage of the L-tryptophan (L-Trp) pyrrole ring and converts L-tryptophan to N-formyl-L-kynurenine. Catalyzes the oxidative cleavage of the indole moiety.</text>
</comment>
<comment type="catalytic activity">
    <reaction evidence="1">
        <text>L-tryptophan + O2 = N-formyl-L-kynurenine</text>
        <dbReference type="Rhea" id="RHEA:24536"/>
        <dbReference type="ChEBI" id="CHEBI:15379"/>
        <dbReference type="ChEBI" id="CHEBI:57912"/>
        <dbReference type="ChEBI" id="CHEBI:58629"/>
        <dbReference type="EC" id="1.13.11.11"/>
    </reaction>
</comment>
<comment type="cofactor">
    <cofactor evidence="1">
        <name>heme</name>
        <dbReference type="ChEBI" id="CHEBI:30413"/>
    </cofactor>
    <text evidence="1">Binds 1 heme group per subunit.</text>
</comment>
<comment type="pathway">
    <text evidence="1">Amino-acid degradation; L-tryptophan degradation via kynurenine pathway; L-kynurenine from L-tryptophan: step 1/2.</text>
</comment>
<comment type="subunit">
    <text evidence="1">Homotetramer.</text>
</comment>
<comment type="similarity">
    <text evidence="1">Belongs to the tryptophan 2,3-dioxygenase family.</text>
</comment>
<gene>
    <name evidence="1" type="primary">kynA</name>
    <name type="ordered locus">BALH_2476</name>
</gene>
<feature type="chain" id="PRO_0000360083" description="Tryptophan 2,3-dioxygenase">
    <location>
        <begin position="1"/>
        <end position="279"/>
    </location>
</feature>
<feature type="binding site" evidence="1">
    <location>
        <begin position="48"/>
        <end position="52"/>
    </location>
    <ligand>
        <name>substrate</name>
    </ligand>
</feature>
<feature type="binding site" evidence="1">
    <location>
        <position position="110"/>
    </location>
    <ligand>
        <name>substrate</name>
    </ligand>
</feature>
<feature type="binding site" evidence="1">
    <location>
        <position position="114"/>
    </location>
    <ligand>
        <name>substrate</name>
    </ligand>
</feature>
<feature type="binding site" description="axial binding residue" evidence="1">
    <location>
        <position position="237"/>
    </location>
    <ligand>
        <name>heme</name>
        <dbReference type="ChEBI" id="CHEBI:30413"/>
    </ligand>
    <ligandPart>
        <name>Fe</name>
        <dbReference type="ChEBI" id="CHEBI:18248"/>
    </ligandPart>
</feature>
<feature type="binding site" evidence="1">
    <location>
        <position position="251"/>
    </location>
    <ligand>
        <name>substrate</name>
    </ligand>
</feature>
<keyword id="KW-0223">Dioxygenase</keyword>
<keyword id="KW-0349">Heme</keyword>
<keyword id="KW-0408">Iron</keyword>
<keyword id="KW-0479">Metal-binding</keyword>
<keyword id="KW-0560">Oxidoreductase</keyword>
<keyword id="KW-0823">Tryptophan catabolism</keyword>
<name>T23O_BACAH</name>
<dbReference type="EC" id="1.13.11.11" evidence="1"/>
<dbReference type="EMBL" id="CP000485">
    <property type="protein sequence ID" value="ABK85763.1"/>
    <property type="molecule type" value="Genomic_DNA"/>
</dbReference>
<dbReference type="RefSeq" id="WP_000661967.1">
    <property type="nucleotide sequence ID" value="NC_008600.1"/>
</dbReference>
<dbReference type="SMR" id="A0REX0"/>
<dbReference type="KEGG" id="btl:BALH_2476"/>
<dbReference type="HOGENOM" id="CLU_063240_0_0_9"/>
<dbReference type="UniPathway" id="UPA00333">
    <property type="reaction ID" value="UER00453"/>
</dbReference>
<dbReference type="GO" id="GO:0020037">
    <property type="term" value="F:heme binding"/>
    <property type="evidence" value="ECO:0000250"/>
    <property type="project" value="UniProtKB"/>
</dbReference>
<dbReference type="GO" id="GO:0046872">
    <property type="term" value="F:metal ion binding"/>
    <property type="evidence" value="ECO:0007669"/>
    <property type="project" value="UniProtKB-KW"/>
</dbReference>
<dbReference type="GO" id="GO:0004833">
    <property type="term" value="F:tryptophan 2,3-dioxygenase activity"/>
    <property type="evidence" value="ECO:0000250"/>
    <property type="project" value="UniProtKB"/>
</dbReference>
<dbReference type="GO" id="GO:0019442">
    <property type="term" value="P:L-tryptophan catabolic process to acetyl-CoA"/>
    <property type="evidence" value="ECO:0007669"/>
    <property type="project" value="TreeGrafter"/>
</dbReference>
<dbReference type="GO" id="GO:0019441">
    <property type="term" value="P:L-tryptophan catabolic process to kynurenine"/>
    <property type="evidence" value="ECO:0000250"/>
    <property type="project" value="UniProtKB"/>
</dbReference>
<dbReference type="FunFam" id="1.20.58.480:FF:000001">
    <property type="entry name" value="Tryptophan 2,3-dioxygenase"/>
    <property type="match status" value="1"/>
</dbReference>
<dbReference type="Gene3D" id="1.20.58.480">
    <property type="match status" value="1"/>
</dbReference>
<dbReference type="HAMAP" id="MF_01972">
    <property type="entry name" value="T23O"/>
    <property type="match status" value="1"/>
</dbReference>
<dbReference type="InterPro" id="IPR037217">
    <property type="entry name" value="Trp/Indoleamine_2_3_dOase-like"/>
</dbReference>
<dbReference type="InterPro" id="IPR017485">
    <property type="entry name" value="Trp_2-3-dOase_bac"/>
</dbReference>
<dbReference type="InterPro" id="IPR004981">
    <property type="entry name" value="Trp_2_3_dOase"/>
</dbReference>
<dbReference type="NCBIfam" id="TIGR03036">
    <property type="entry name" value="trp_2_3_diox"/>
    <property type="match status" value="1"/>
</dbReference>
<dbReference type="PANTHER" id="PTHR10138">
    <property type="entry name" value="TRYPTOPHAN 2,3-DIOXYGENASE"/>
    <property type="match status" value="1"/>
</dbReference>
<dbReference type="PANTHER" id="PTHR10138:SF0">
    <property type="entry name" value="TRYPTOPHAN 2,3-DIOXYGENASE"/>
    <property type="match status" value="1"/>
</dbReference>
<dbReference type="Pfam" id="PF03301">
    <property type="entry name" value="Trp_dioxygenase"/>
    <property type="match status" value="1"/>
</dbReference>
<dbReference type="SUPFAM" id="SSF140959">
    <property type="entry name" value="Indolic compounds 2,3-dioxygenase-like"/>
    <property type="match status" value="1"/>
</dbReference>